<gene>
    <name evidence="1" type="primary">pepX</name>
    <name type="ordered locus">SPN23F08160</name>
</gene>
<proteinExistence type="inferred from homology"/>
<name>PEPX_STRPJ</name>
<sequence length="757" mass="86914">MRFNQYSYINFPKENVLSELKKCGFDLQNTANHKDSLETFLRRFFFTYQDTNYPLSILAADKKTDLLTFFQSEDELTADIFYTVAFQLLGFSYLVDFEDSDVFRKETGFPIIYGDLIENLYQLLNTRTKKGNTLIDQLVSDGLIPEDNDYHYFNGKSLATFSNQDVIREVVYVESRVDTDQKGLSDLVKVSIIRPRFDGKIPAIMTASPYHQGTNDKASDKALYKMEVELEVKLPHKIELEEPQLNLVQPQGQAELVAEAEEKLTHINSSYTLNDYFLPRGFANLYVSGVGTKDSTGFMTNGDYQQIEAYKNVIDWLNGRCRAFTDHTRQRQVKADWSNGKVATTGLSYLGTMSNGLATTGVDGLEVIIAEAGISSWYNYYRENGLVTSPGGYPGEDFDSLAELTYSRNLLAGDYIRGNEAHQADLEKVKAQLDRKTGDYNQFWHDRNYLLNAHKVKAEVVFTHGSQDWNVKPLHVYQMFHALPTHIHKHLFFHNGAHVYMNNWQSIDFRESINALLTKKLLGQETDFQLPTVIWQDNTAPQTWLSLDNFGGQENCETFSLGQEEQAIQNQYPDKDFERYGKTYQTFNTELYQGKANQITINLPVTKDLHLNGRAQLNLRIKSSTNKGLLSAQLLEFGQKKYLQPYPAILSARTIDNGRYHMLENLCELPFRPEAQRVVTKGYLNLQNRNDLLLVEDITADEWMDVQFELQPTIYKLKEGDTLRLVLYTTDFEITIRDNTDYHLTVDLAQSMLTLPC</sequence>
<protein>
    <recommendedName>
        <fullName evidence="1">Xaa-Pro dipeptidyl-peptidase</fullName>
        <ecNumber evidence="1">3.4.14.11</ecNumber>
    </recommendedName>
    <alternativeName>
        <fullName evidence="1">X-Pro dipeptidyl-peptidase</fullName>
    </alternativeName>
    <alternativeName>
        <fullName evidence="1">X-prolyl-dipeptidyl aminopeptidase</fullName>
        <shortName evidence="1">X-PDAP</shortName>
    </alternativeName>
</protein>
<comment type="function">
    <text evidence="1">Removes N-terminal dipeptides sequentially from polypeptides having unsubstituted N-termini provided that the penultimate residue is proline.</text>
</comment>
<comment type="catalytic activity">
    <reaction evidence="1">
        <text>Hydrolyzes Xaa-Pro-|- bonds to release unblocked, N-terminal dipeptides from substrates including Ala-Pro-|-p-nitroanilide and (sequentially) Tyr-Pro-|-Phe-Pro-|-Gly-Pro-|-Ile.</text>
        <dbReference type="EC" id="3.4.14.11"/>
    </reaction>
</comment>
<comment type="subunit">
    <text evidence="1">Homodimer.</text>
</comment>
<comment type="subcellular location">
    <subcellularLocation>
        <location evidence="1">Cytoplasm</location>
    </subcellularLocation>
</comment>
<comment type="similarity">
    <text evidence="1">Belongs to the peptidase S15 family.</text>
</comment>
<evidence type="ECO:0000255" key="1">
    <source>
        <dbReference type="HAMAP-Rule" id="MF_00698"/>
    </source>
</evidence>
<accession>B8ZNT8</accession>
<feature type="chain" id="PRO_1000192758" description="Xaa-Pro dipeptidyl-peptidase">
    <location>
        <begin position="1"/>
        <end position="757"/>
    </location>
</feature>
<feature type="active site" description="Charge relay system" evidence="1">
    <location>
        <position position="348"/>
    </location>
</feature>
<feature type="active site" description="Charge relay system" evidence="1">
    <location>
        <position position="468"/>
    </location>
</feature>
<feature type="active site" description="Charge relay system" evidence="1">
    <location>
        <position position="498"/>
    </location>
</feature>
<dbReference type="EC" id="3.4.14.11" evidence="1"/>
<dbReference type="EMBL" id="FM211187">
    <property type="protein sequence ID" value="CAR68650.1"/>
    <property type="molecule type" value="Genomic_DNA"/>
</dbReference>
<dbReference type="RefSeq" id="WP_001212055.1">
    <property type="nucleotide sequence ID" value="NC_011900.1"/>
</dbReference>
<dbReference type="SMR" id="B8ZNT8"/>
<dbReference type="ESTHER" id="strpi-pepx">
    <property type="family name" value="Lactobacillus_peptidase"/>
</dbReference>
<dbReference type="MEROPS" id="S15.001"/>
<dbReference type="KEGG" id="sne:SPN23F08160"/>
<dbReference type="HOGENOM" id="CLU_011800_0_0_9"/>
<dbReference type="GO" id="GO:0005737">
    <property type="term" value="C:cytoplasm"/>
    <property type="evidence" value="ECO:0007669"/>
    <property type="project" value="UniProtKB-SubCell"/>
</dbReference>
<dbReference type="GO" id="GO:0004177">
    <property type="term" value="F:aminopeptidase activity"/>
    <property type="evidence" value="ECO:0007669"/>
    <property type="project" value="UniProtKB-KW"/>
</dbReference>
<dbReference type="GO" id="GO:0008239">
    <property type="term" value="F:dipeptidyl-peptidase activity"/>
    <property type="evidence" value="ECO:0007669"/>
    <property type="project" value="UniProtKB-UniRule"/>
</dbReference>
<dbReference type="GO" id="GO:0008236">
    <property type="term" value="F:serine-type peptidase activity"/>
    <property type="evidence" value="ECO:0007669"/>
    <property type="project" value="UniProtKB-KW"/>
</dbReference>
<dbReference type="GO" id="GO:0006508">
    <property type="term" value="P:proteolysis"/>
    <property type="evidence" value="ECO:0007669"/>
    <property type="project" value="UniProtKB-KW"/>
</dbReference>
<dbReference type="Gene3D" id="1.10.246.70">
    <property type="match status" value="1"/>
</dbReference>
<dbReference type="Gene3D" id="3.40.50.1820">
    <property type="entry name" value="alpha/beta hydrolase"/>
    <property type="match status" value="1"/>
</dbReference>
<dbReference type="Gene3D" id="2.60.120.260">
    <property type="entry name" value="Galactose-binding domain-like"/>
    <property type="match status" value="1"/>
</dbReference>
<dbReference type="HAMAP" id="MF_00698">
    <property type="entry name" value="Aminopeptidase_S15"/>
    <property type="match status" value="1"/>
</dbReference>
<dbReference type="InterPro" id="IPR029058">
    <property type="entry name" value="AB_hydrolase_fold"/>
</dbReference>
<dbReference type="InterPro" id="IPR008979">
    <property type="entry name" value="Galactose-bd-like_sf"/>
</dbReference>
<dbReference type="InterPro" id="IPR008252">
    <property type="entry name" value="Pept_S15_Xpro"/>
</dbReference>
<dbReference type="InterPro" id="IPR015251">
    <property type="entry name" value="PepX_N_dom"/>
</dbReference>
<dbReference type="InterPro" id="IPR036313">
    <property type="entry name" value="PepX_N_dom_sf"/>
</dbReference>
<dbReference type="InterPro" id="IPR000383">
    <property type="entry name" value="Xaa-Pro-like_dom"/>
</dbReference>
<dbReference type="InterPro" id="IPR013736">
    <property type="entry name" value="Xaa-Pro_dipept_C"/>
</dbReference>
<dbReference type="InterPro" id="IPR050585">
    <property type="entry name" value="Xaa-Pro_dipeptidyl-ppase/CocE"/>
</dbReference>
<dbReference type="NCBIfam" id="NF003783">
    <property type="entry name" value="PRK05371.1-4"/>
    <property type="match status" value="1"/>
</dbReference>
<dbReference type="PANTHER" id="PTHR43056:SF10">
    <property type="entry name" value="COCE_NOND FAMILY, PUTATIVE (AFU_ORTHOLOGUE AFUA_7G00600)-RELATED"/>
    <property type="match status" value="1"/>
</dbReference>
<dbReference type="PANTHER" id="PTHR43056">
    <property type="entry name" value="PEPTIDASE S9 PROLYL OLIGOPEPTIDASE"/>
    <property type="match status" value="1"/>
</dbReference>
<dbReference type="Pfam" id="PF02129">
    <property type="entry name" value="Peptidase_S15"/>
    <property type="match status" value="1"/>
</dbReference>
<dbReference type="Pfam" id="PF08530">
    <property type="entry name" value="PepX_C"/>
    <property type="match status" value="1"/>
</dbReference>
<dbReference type="Pfam" id="PF09168">
    <property type="entry name" value="PepX_N"/>
    <property type="match status" value="1"/>
</dbReference>
<dbReference type="PRINTS" id="PR00923">
    <property type="entry name" value="LACTOPTASE"/>
</dbReference>
<dbReference type="SMART" id="SM00939">
    <property type="entry name" value="PepX_C"/>
    <property type="match status" value="1"/>
</dbReference>
<dbReference type="SMART" id="SM00940">
    <property type="entry name" value="PepX_N"/>
    <property type="match status" value="1"/>
</dbReference>
<dbReference type="SUPFAM" id="SSF53474">
    <property type="entry name" value="alpha/beta-Hydrolases"/>
    <property type="match status" value="1"/>
</dbReference>
<dbReference type="SUPFAM" id="SSF49785">
    <property type="entry name" value="Galactose-binding domain-like"/>
    <property type="match status" value="1"/>
</dbReference>
<dbReference type="SUPFAM" id="SSF81761">
    <property type="entry name" value="X-Prolyl dipeptidyl aminopeptidase PepX, N-terminal domain"/>
    <property type="match status" value="1"/>
</dbReference>
<keyword id="KW-0031">Aminopeptidase</keyword>
<keyword id="KW-0963">Cytoplasm</keyword>
<keyword id="KW-0378">Hydrolase</keyword>
<keyword id="KW-0645">Protease</keyword>
<keyword id="KW-0720">Serine protease</keyword>
<reference key="1">
    <citation type="journal article" date="2009" name="J. Bacteriol.">
        <title>Role of conjugative elements in the evolution of the multidrug-resistant pandemic clone Streptococcus pneumoniae Spain23F ST81.</title>
        <authorList>
            <person name="Croucher N.J."/>
            <person name="Walker D."/>
            <person name="Romero P."/>
            <person name="Lennard N."/>
            <person name="Paterson G.K."/>
            <person name="Bason N.C."/>
            <person name="Mitchell A.M."/>
            <person name="Quail M.A."/>
            <person name="Andrew P.W."/>
            <person name="Parkhill J."/>
            <person name="Bentley S.D."/>
            <person name="Mitchell T.J."/>
        </authorList>
    </citation>
    <scope>NUCLEOTIDE SEQUENCE [LARGE SCALE GENOMIC DNA]</scope>
    <source>
        <strain>ATCC 700669 / Spain 23F-1</strain>
    </source>
</reference>
<organism>
    <name type="scientific">Streptococcus pneumoniae (strain ATCC 700669 / Spain 23F-1)</name>
    <dbReference type="NCBI Taxonomy" id="561276"/>
    <lineage>
        <taxon>Bacteria</taxon>
        <taxon>Bacillati</taxon>
        <taxon>Bacillota</taxon>
        <taxon>Bacilli</taxon>
        <taxon>Lactobacillales</taxon>
        <taxon>Streptococcaceae</taxon>
        <taxon>Streptococcus</taxon>
    </lineage>
</organism>